<protein>
    <recommendedName>
        <fullName evidence="1">Acyl-[acyl-carrier-protein]--UDP-N-acetylglucosamine O-acyltransferase</fullName>
        <shortName evidence="1">UDP-N-acetylglucosamine acyltransferase</shortName>
        <ecNumber evidence="1">2.3.1.129</ecNumber>
    </recommendedName>
</protein>
<reference key="1">
    <citation type="journal article" date="2010" name="Genome Biol. Evol.">
        <title>Continuing evolution of Burkholderia mallei through genome reduction and large-scale rearrangements.</title>
        <authorList>
            <person name="Losada L."/>
            <person name="Ronning C.M."/>
            <person name="DeShazer D."/>
            <person name="Woods D."/>
            <person name="Fedorova N."/>
            <person name="Kim H.S."/>
            <person name="Shabalina S.A."/>
            <person name="Pearson T.R."/>
            <person name="Brinkac L."/>
            <person name="Tan P."/>
            <person name="Nandi T."/>
            <person name="Crabtree J."/>
            <person name="Badger J."/>
            <person name="Beckstrom-Sternberg S."/>
            <person name="Saqib M."/>
            <person name="Schutzer S.E."/>
            <person name="Keim P."/>
            <person name="Nierman W.C."/>
        </authorList>
    </citation>
    <scope>NUCLEOTIDE SEQUENCE [LARGE SCALE GENOMIC DNA]</scope>
    <source>
        <strain>NCTC 10247</strain>
    </source>
</reference>
<comment type="function">
    <text evidence="1">Involved in the biosynthesis of lipid A, a phosphorylated glycolipid that anchors the lipopolysaccharide to the outer membrane of the cell.</text>
</comment>
<comment type="catalytic activity">
    <reaction evidence="1">
        <text>a (3R)-hydroxyacyl-[ACP] + UDP-N-acetyl-alpha-D-glucosamine = a UDP-3-O-[(3R)-3-hydroxyacyl]-N-acetyl-alpha-D-glucosamine + holo-[ACP]</text>
        <dbReference type="Rhea" id="RHEA:67812"/>
        <dbReference type="Rhea" id="RHEA-COMP:9685"/>
        <dbReference type="Rhea" id="RHEA-COMP:9945"/>
        <dbReference type="ChEBI" id="CHEBI:57705"/>
        <dbReference type="ChEBI" id="CHEBI:64479"/>
        <dbReference type="ChEBI" id="CHEBI:78827"/>
        <dbReference type="ChEBI" id="CHEBI:173225"/>
        <dbReference type="EC" id="2.3.1.129"/>
    </reaction>
</comment>
<comment type="pathway">
    <text evidence="1">Glycolipid biosynthesis; lipid IV(A) biosynthesis; lipid IV(A) from (3R)-3-hydroxytetradecanoyl-[acyl-carrier-protein] and UDP-N-acetyl-alpha-D-glucosamine: step 1/6.</text>
</comment>
<comment type="subunit">
    <text evidence="1">Homotrimer.</text>
</comment>
<comment type="subcellular location">
    <subcellularLocation>
        <location evidence="1">Cytoplasm</location>
    </subcellularLocation>
</comment>
<comment type="similarity">
    <text evidence="1">Belongs to the transferase hexapeptide repeat family. LpxA subfamily.</text>
</comment>
<evidence type="ECO:0000255" key="1">
    <source>
        <dbReference type="HAMAP-Rule" id="MF_00387"/>
    </source>
</evidence>
<proteinExistence type="inferred from homology"/>
<sequence length="262" mass="27941">MSRIHPTAIIEPGAQLHETVEVGPYAIVGSHVTIGARTTIGSHSVIEGHTTIGEDNRIGHYASVGGRPQDMKYKDEPTRLVIGDRNTIREFTTIHTGTVQDTGVTTLGDDNWIMAYVHIGHDCRVGSHVILSSNAQMAGHVEIGDWAIVGGMSGVHQFVRIGAHSMLGGASALVQDIPPFVIAAGNKAEPHGINVEGLRRRGFSPDAISALRSAYRILYKNSLSLEEAKVQLSELAQAGGDGDAAVKSLVDFVESSQRGIIR</sequence>
<accession>A3MKT0</accession>
<gene>
    <name evidence="1" type="primary">lpxA</name>
    <name type="ordered locus">BMA10247_1315</name>
</gene>
<organism>
    <name type="scientific">Burkholderia mallei (strain NCTC 10247)</name>
    <dbReference type="NCBI Taxonomy" id="320389"/>
    <lineage>
        <taxon>Bacteria</taxon>
        <taxon>Pseudomonadati</taxon>
        <taxon>Pseudomonadota</taxon>
        <taxon>Betaproteobacteria</taxon>
        <taxon>Burkholderiales</taxon>
        <taxon>Burkholderiaceae</taxon>
        <taxon>Burkholderia</taxon>
        <taxon>pseudomallei group</taxon>
    </lineage>
</organism>
<name>LPXA_BURM7</name>
<feature type="chain" id="PRO_1000013151" description="Acyl-[acyl-carrier-protein]--UDP-N-acetylglucosamine O-acyltransferase">
    <location>
        <begin position="1"/>
        <end position="262"/>
    </location>
</feature>
<keyword id="KW-0012">Acyltransferase</keyword>
<keyword id="KW-0963">Cytoplasm</keyword>
<keyword id="KW-0441">Lipid A biosynthesis</keyword>
<keyword id="KW-0444">Lipid biosynthesis</keyword>
<keyword id="KW-0443">Lipid metabolism</keyword>
<keyword id="KW-0677">Repeat</keyword>
<keyword id="KW-0808">Transferase</keyword>
<dbReference type="EC" id="2.3.1.129" evidence="1"/>
<dbReference type="EMBL" id="CP000548">
    <property type="protein sequence ID" value="ABO05911.1"/>
    <property type="molecule type" value="Genomic_DNA"/>
</dbReference>
<dbReference type="RefSeq" id="WP_004193051.1">
    <property type="nucleotide sequence ID" value="NZ_CP007802.1"/>
</dbReference>
<dbReference type="SMR" id="A3MKT0"/>
<dbReference type="GeneID" id="93060688"/>
<dbReference type="KEGG" id="bmaz:BM44_1810"/>
<dbReference type="KEGG" id="bmn:BMA10247_1315"/>
<dbReference type="PATRIC" id="fig|320389.8.peg.2025"/>
<dbReference type="UniPathway" id="UPA00359">
    <property type="reaction ID" value="UER00477"/>
</dbReference>
<dbReference type="GO" id="GO:0005737">
    <property type="term" value="C:cytoplasm"/>
    <property type="evidence" value="ECO:0007669"/>
    <property type="project" value="UniProtKB-SubCell"/>
</dbReference>
<dbReference type="GO" id="GO:0016020">
    <property type="term" value="C:membrane"/>
    <property type="evidence" value="ECO:0007669"/>
    <property type="project" value="GOC"/>
</dbReference>
<dbReference type="GO" id="GO:0008780">
    <property type="term" value="F:acyl-[acyl-carrier-protein]-UDP-N-acetylglucosamine O-acyltransferase activity"/>
    <property type="evidence" value="ECO:0007669"/>
    <property type="project" value="UniProtKB-UniRule"/>
</dbReference>
<dbReference type="GO" id="GO:0009245">
    <property type="term" value="P:lipid A biosynthetic process"/>
    <property type="evidence" value="ECO:0007669"/>
    <property type="project" value="UniProtKB-UniRule"/>
</dbReference>
<dbReference type="CDD" id="cd03351">
    <property type="entry name" value="LbH_UDP-GlcNAc_AT"/>
    <property type="match status" value="1"/>
</dbReference>
<dbReference type="Gene3D" id="2.160.10.10">
    <property type="entry name" value="Hexapeptide repeat proteins"/>
    <property type="match status" value="1"/>
</dbReference>
<dbReference type="Gene3D" id="1.20.1180.10">
    <property type="entry name" value="Udp N-acetylglucosamine O-acyltransferase, C-terminal domain"/>
    <property type="match status" value="1"/>
</dbReference>
<dbReference type="HAMAP" id="MF_00387">
    <property type="entry name" value="LpxA"/>
    <property type="match status" value="1"/>
</dbReference>
<dbReference type="InterPro" id="IPR029098">
    <property type="entry name" value="Acetyltransf_C"/>
</dbReference>
<dbReference type="InterPro" id="IPR037157">
    <property type="entry name" value="Acetyltransf_C_sf"/>
</dbReference>
<dbReference type="InterPro" id="IPR001451">
    <property type="entry name" value="Hexapep"/>
</dbReference>
<dbReference type="InterPro" id="IPR010137">
    <property type="entry name" value="Lipid_A_LpxA"/>
</dbReference>
<dbReference type="InterPro" id="IPR011004">
    <property type="entry name" value="Trimer_LpxA-like_sf"/>
</dbReference>
<dbReference type="NCBIfam" id="TIGR01852">
    <property type="entry name" value="lipid_A_lpxA"/>
    <property type="match status" value="1"/>
</dbReference>
<dbReference type="NCBIfam" id="NF003657">
    <property type="entry name" value="PRK05289.1"/>
    <property type="match status" value="1"/>
</dbReference>
<dbReference type="PANTHER" id="PTHR43480">
    <property type="entry name" value="ACYL-[ACYL-CARRIER-PROTEIN]--UDP-N-ACETYLGLUCOSAMINE O-ACYLTRANSFERASE"/>
    <property type="match status" value="1"/>
</dbReference>
<dbReference type="PANTHER" id="PTHR43480:SF1">
    <property type="entry name" value="ACYL-[ACYL-CARRIER-PROTEIN]--UDP-N-ACETYLGLUCOSAMINE O-ACYLTRANSFERASE, MITOCHONDRIAL-RELATED"/>
    <property type="match status" value="1"/>
</dbReference>
<dbReference type="Pfam" id="PF13720">
    <property type="entry name" value="Acetyltransf_11"/>
    <property type="match status" value="1"/>
</dbReference>
<dbReference type="Pfam" id="PF00132">
    <property type="entry name" value="Hexapep"/>
    <property type="match status" value="2"/>
</dbReference>
<dbReference type="PIRSF" id="PIRSF000456">
    <property type="entry name" value="UDP-GlcNAc_acltr"/>
    <property type="match status" value="1"/>
</dbReference>
<dbReference type="SUPFAM" id="SSF51161">
    <property type="entry name" value="Trimeric LpxA-like enzymes"/>
    <property type="match status" value="1"/>
</dbReference>
<dbReference type="PROSITE" id="PS00101">
    <property type="entry name" value="HEXAPEP_TRANSFERASES"/>
    <property type="match status" value="1"/>
</dbReference>